<keyword id="KW-0227">DNA damage</keyword>
<keyword id="KW-0233">DNA recombination</keyword>
<keyword id="KW-0234">DNA repair</keyword>
<feature type="chain" id="PRO_0000205004" description="DNA repair protein RecO">
    <location>
        <begin position="1"/>
        <end position="253"/>
    </location>
</feature>
<organism>
    <name type="scientific">Streptococcus agalactiae serotype III (strain NEM316)</name>
    <dbReference type="NCBI Taxonomy" id="211110"/>
    <lineage>
        <taxon>Bacteria</taxon>
        <taxon>Bacillati</taxon>
        <taxon>Bacillota</taxon>
        <taxon>Bacilli</taxon>
        <taxon>Lactobacillales</taxon>
        <taxon>Streptococcaceae</taxon>
        <taxon>Streptococcus</taxon>
    </lineage>
</organism>
<proteinExistence type="inferred from homology"/>
<reference key="1">
    <citation type="journal article" date="2002" name="Mol. Microbiol.">
        <title>Genome sequence of Streptococcus agalactiae, a pathogen causing invasive neonatal disease.</title>
        <authorList>
            <person name="Glaser P."/>
            <person name="Rusniok C."/>
            <person name="Buchrieser C."/>
            <person name="Chevalier F."/>
            <person name="Frangeul L."/>
            <person name="Msadek T."/>
            <person name="Zouine M."/>
            <person name="Couve E."/>
            <person name="Lalioui L."/>
            <person name="Poyart C."/>
            <person name="Trieu-Cuot P."/>
            <person name="Kunst F."/>
        </authorList>
    </citation>
    <scope>NUCLEOTIDE SEQUENCE [LARGE SCALE GENOMIC DNA]</scope>
    <source>
        <strain>NEM316</strain>
    </source>
</reference>
<sequence>MRVSQTYGLVLYNRNYREDDKLVKIFTETEGKRMFFVKHASKSKFNAVLQPLTIAHFILKINDNGLSYIDDYKEVLAFQETNSDLFKLSYASYITSLADVAISDNVADAQLFIFLKKTLELIEDGLDYEILTNIFEVQLLERFGVALNFHDCVFCHRVGLPFDFSHKYSGLLCPNHYYKDERRNHLDPNMLYLINRFQSIQFDDLQTISVKPEMKLKIRQFLDMIYDEYVGIHLKSKKFIDDLSSWGSIMKSD</sequence>
<comment type="function">
    <text evidence="1">Involved in DNA repair and RecF pathway recombination.</text>
</comment>
<comment type="similarity">
    <text evidence="1">Belongs to the RecO family.</text>
</comment>
<protein>
    <recommendedName>
        <fullName evidence="1">DNA repair protein RecO</fullName>
    </recommendedName>
    <alternativeName>
        <fullName evidence="1">Recombination protein O</fullName>
    </alternativeName>
</protein>
<accession>Q8E7X6</accession>
<evidence type="ECO:0000255" key="1">
    <source>
        <dbReference type="HAMAP-Rule" id="MF_00201"/>
    </source>
</evidence>
<gene>
    <name evidence="1" type="primary">recO</name>
    <name type="ordered locus">gbs0019</name>
</gene>
<dbReference type="EMBL" id="AL766843">
    <property type="protein sequence ID" value="CAD45664.1"/>
    <property type="molecule type" value="Genomic_DNA"/>
</dbReference>
<dbReference type="RefSeq" id="WP_001266275.1">
    <property type="nucleotide sequence ID" value="NC_004368.1"/>
</dbReference>
<dbReference type="SMR" id="Q8E7X6"/>
<dbReference type="KEGG" id="san:gbs0019"/>
<dbReference type="eggNOG" id="COG1381">
    <property type="taxonomic scope" value="Bacteria"/>
</dbReference>
<dbReference type="HOGENOM" id="CLU_066632_4_0_9"/>
<dbReference type="Proteomes" id="UP000000823">
    <property type="component" value="Chromosome"/>
</dbReference>
<dbReference type="GO" id="GO:0043590">
    <property type="term" value="C:bacterial nucleoid"/>
    <property type="evidence" value="ECO:0007669"/>
    <property type="project" value="TreeGrafter"/>
</dbReference>
<dbReference type="GO" id="GO:0006310">
    <property type="term" value="P:DNA recombination"/>
    <property type="evidence" value="ECO:0007669"/>
    <property type="project" value="UniProtKB-UniRule"/>
</dbReference>
<dbReference type="GO" id="GO:0006302">
    <property type="term" value="P:double-strand break repair"/>
    <property type="evidence" value="ECO:0007669"/>
    <property type="project" value="TreeGrafter"/>
</dbReference>
<dbReference type="Gene3D" id="2.40.50.140">
    <property type="entry name" value="Nucleic acid-binding proteins"/>
    <property type="match status" value="1"/>
</dbReference>
<dbReference type="Gene3D" id="1.20.1440.120">
    <property type="entry name" value="Recombination protein O, C-terminal domain"/>
    <property type="match status" value="1"/>
</dbReference>
<dbReference type="HAMAP" id="MF_00201">
    <property type="entry name" value="RecO"/>
    <property type="match status" value="1"/>
</dbReference>
<dbReference type="InterPro" id="IPR037278">
    <property type="entry name" value="ARFGAP/RecO"/>
</dbReference>
<dbReference type="InterPro" id="IPR022572">
    <property type="entry name" value="DNA_rep/recomb_RecO_N"/>
</dbReference>
<dbReference type="InterPro" id="IPR012340">
    <property type="entry name" value="NA-bd_OB-fold"/>
</dbReference>
<dbReference type="InterPro" id="IPR003717">
    <property type="entry name" value="RecO"/>
</dbReference>
<dbReference type="InterPro" id="IPR042242">
    <property type="entry name" value="RecO_C"/>
</dbReference>
<dbReference type="NCBIfam" id="TIGR00613">
    <property type="entry name" value="reco"/>
    <property type="match status" value="1"/>
</dbReference>
<dbReference type="PANTHER" id="PTHR33991">
    <property type="entry name" value="DNA REPAIR PROTEIN RECO"/>
    <property type="match status" value="1"/>
</dbReference>
<dbReference type="PANTHER" id="PTHR33991:SF1">
    <property type="entry name" value="DNA REPAIR PROTEIN RECO"/>
    <property type="match status" value="1"/>
</dbReference>
<dbReference type="Pfam" id="PF02565">
    <property type="entry name" value="RecO_C"/>
    <property type="match status" value="1"/>
</dbReference>
<dbReference type="Pfam" id="PF11967">
    <property type="entry name" value="RecO_N"/>
    <property type="match status" value="1"/>
</dbReference>
<dbReference type="SUPFAM" id="SSF57863">
    <property type="entry name" value="ArfGap/RecO-like zinc finger"/>
    <property type="match status" value="1"/>
</dbReference>
<dbReference type="SUPFAM" id="SSF50249">
    <property type="entry name" value="Nucleic acid-binding proteins"/>
    <property type="match status" value="1"/>
</dbReference>
<name>RECO_STRA3</name>